<name>ASTX3_ASTEC</name>
<accession>E8RUP8</accession>
<comment type="function">
    <text evidence="1">Shows weak antimicrobial activity against its phylogenetic relative Caulobacter crescentus. Does not show activity against other bacteria tested (E.coli, Vibrio sp, Burkhoderia thailandensis, and Salmonella newport).</text>
</comment>
<comment type="biophysicochemical properties">
    <temperatureDependence>
        <text evidence="2">Highly thermostable.</text>
    </temperatureDependence>
</comment>
<comment type="subcellular location">
    <subcellularLocation>
        <location evidence="8">Cytoplasm</location>
    </subcellularLocation>
    <subcellularLocation>
        <location evidence="8">Secreted</location>
    </subcellularLocation>
    <text evidence="8 9 10">Intracellular, when expressed in E.coli. The gene cluster lacks the ABC transporter usually responsible for export of the mature peptide (Probable). May be secreted in vivo (Probable).</text>
</comment>
<comment type="domain">
    <text evidence="3 4 8 9">Is composed of a ring composed by 9 residues, a 5 residue-loop (SVSGQ) and a C-terminal tail (PubMed:26534965). The peptide is threaded when the C-terminal tail is inserted throught the isopeptide-bonded ring. The loop region serves as a recognition element for the isopeptidase AtxE2 (Probable) (PubMed:27998080).</text>
</comment>
<comment type="PTM">
    <text evidence="2">This lasso peptide is hydrolyzed to a linear form by the isopeptidase AtxE2, in vitro. The isopeptidase AtxE2 only recognizes the threaded form (but not the unthreaded form).</text>
</comment>
<dbReference type="EMBL" id="CP002396">
    <property type="protein sequence ID" value="ADU14098.1"/>
    <property type="molecule type" value="Genomic_DNA"/>
</dbReference>
<dbReference type="RefSeq" id="WP_013479923.1">
    <property type="nucleotide sequence ID" value="NC_014817.1"/>
</dbReference>
<dbReference type="PDB" id="2M8F">
    <property type="method" value="NMR"/>
    <property type="chains" value="A=26-49"/>
</dbReference>
<dbReference type="PDB" id="2N6V">
    <property type="method" value="NMR"/>
    <property type="chains" value="A=26-49"/>
</dbReference>
<dbReference type="PDB" id="5TXE">
    <property type="method" value="X-ray"/>
    <property type="resolution" value="2.20 A"/>
    <property type="chains" value="C/D=26-49"/>
</dbReference>
<dbReference type="PDBsum" id="2M8F"/>
<dbReference type="PDBsum" id="2N6V"/>
<dbReference type="PDBsum" id="5TXE"/>
<dbReference type="BMRB" id="E8RUP8"/>
<dbReference type="SMR" id="E8RUP8"/>
<dbReference type="STRING" id="573065.Astex_2447"/>
<dbReference type="KEGG" id="aex:Astex_2447"/>
<dbReference type="HOGENOM" id="CLU_3131825_0_0_5"/>
<dbReference type="EvolutionaryTrace" id="E8RUP8"/>
<dbReference type="Proteomes" id="UP000001492">
    <property type="component" value="Chromosome 2"/>
</dbReference>
<dbReference type="GO" id="GO:0005737">
    <property type="term" value="C:cytoplasm"/>
    <property type="evidence" value="ECO:0007669"/>
    <property type="project" value="UniProtKB-SubCell"/>
</dbReference>
<dbReference type="GO" id="GO:0005576">
    <property type="term" value="C:extracellular region"/>
    <property type="evidence" value="ECO:0007669"/>
    <property type="project" value="UniProtKB-SubCell"/>
</dbReference>
<dbReference type="GO" id="GO:0042742">
    <property type="term" value="P:defense response to bacterium"/>
    <property type="evidence" value="ECO:0007669"/>
    <property type="project" value="UniProtKB-KW"/>
</dbReference>
<feature type="propeptide" id="PRO_0000450592" evidence="8 9">
    <location>
        <begin position="1"/>
        <end position="25"/>
    </location>
</feature>
<feature type="peptide" id="PRO_0000450593" description="Astexin-3" evidence="8 9">
    <location>
        <begin position="26"/>
        <end position="49"/>
    </location>
</feature>
<feature type="cross-link" description="Isoaspartyl glycine isopeptide (Gly-Asp)" evidence="2 3">
    <location>
        <begin position="26"/>
        <end position="34"/>
    </location>
</feature>
<feature type="mutagenesis site" description="Decrease in cleavage by the isopeptidase AtxE2." evidence="3">
    <original>S</original>
    <variation>A</variation>
    <location>
        <position position="35"/>
    </location>
</feature>
<feature type="mutagenesis site" description="Decrease in cleavage by the isopeptidase AtxE2." evidence="3">
    <original>V</original>
    <variation>A</variation>
    <location>
        <position position="36"/>
    </location>
</feature>
<feature type="mutagenesis site" description="Decrease in cleavage by the isopeptidase AtxE2." evidence="3">
    <original>S</original>
    <variation>A</variation>
    <location>
        <position position="37"/>
    </location>
</feature>
<feature type="mutagenesis site" description="Decrease in cleavage by the isopeptidase AtxE2." evidence="3">
    <original>Q</original>
    <variation>A</variation>
    <location>
        <position position="39"/>
    </location>
</feature>
<feature type="strand" evidence="17">
    <location>
        <begin position="30"/>
        <end position="34"/>
    </location>
</feature>
<feature type="turn" evidence="17">
    <location>
        <begin position="35"/>
        <end position="38"/>
    </location>
</feature>
<feature type="turn" evidence="16">
    <location>
        <begin position="46"/>
        <end position="48"/>
    </location>
</feature>
<protein>
    <recommendedName>
        <fullName evidence="5 6 7">Astexin-3</fullName>
    </recommendedName>
    <alternativeName>
        <fullName evidence="5 6">Class II lasso peptide</fullName>
    </alternativeName>
    <alternativeName>
        <fullName evidence="5">Ribosomally synthesized and post-translationally modified peptide</fullName>
        <shortName evidence="5">RiPP</shortName>
    </alternativeName>
</protein>
<reference evidence="12" key="1">
    <citation type="submission" date="2010-12" db="EMBL/GenBank/DDBJ databases">
        <title>Complete sequence of chromosome 2 of Asticcacaulis excentricus CB 48.</title>
        <authorList>
            <consortium name="US DOE Joint Genome Institute"/>
            <person name="Lucas S."/>
            <person name="Copeland A."/>
            <person name="Lapidus A."/>
            <person name="Cheng J.-F."/>
            <person name="Bruce D."/>
            <person name="Goodwin L."/>
            <person name="Pitluck S."/>
            <person name="Teshima H."/>
            <person name="Davenport K."/>
            <person name="Detter J.C."/>
            <person name="Han C."/>
            <person name="Tapia R."/>
            <person name="Land M."/>
            <person name="Hauser L."/>
            <person name="Jeffries C."/>
            <person name="Kyrpides N."/>
            <person name="Ivanova N."/>
            <person name="Ovchinnikova G."/>
            <person name="Brun Y.V."/>
            <person name="Woyke T."/>
        </authorList>
    </citation>
    <scope>NUCLEOTIDE SEQUENCE [LARGE SCALE GENOMIC DNA]</scope>
    <source>
        <strain>ATCC 15261 / DSM 4724 / KCTC 12464 / NCIMB 9791 / VKM B-1370 / CB 48</strain>
    </source>
</reference>
<reference evidence="13" key="2">
    <citation type="journal article" date="2013" name="J. Am. Chem. Soc.">
        <title>Discovery and characterization of an isopeptidase that linearizes lasso peptides.</title>
        <authorList>
            <person name="Maksimov M.O."/>
            <person name="Link A.J."/>
        </authorList>
    </citation>
    <scope>STRUCTURE BY NMR OF 26-49</scope>
    <scope>BIOPHYSICOCHEMICAL PROPERTIES</scope>
    <scope>EXPRESSION IN E.COLI</scope>
</reference>
<reference evidence="14" key="3">
    <citation type="journal article" date="2015" name="J. Biol. Chem.">
        <title>Elucidating the specificity determinants of the AtxE2 lasso peptide isopeptidase.</title>
        <authorList>
            <person name="Maksimov M.O."/>
            <person name="Koos J.D."/>
            <person name="Zong C."/>
            <person name="Lisko B."/>
            <person name="Link A.J."/>
        </authorList>
    </citation>
    <scope>STRUCTURE BY NMR OF 26-49</scope>
    <scope>MUTAGENESIS OF SER-35; VAL-36; SER-37 AND GLN-39</scope>
    <scope>EXPRESSION IN E.COLI</scope>
</reference>
<reference evidence="15" key="4">
    <citation type="journal article" date="2016" name="J. Am. Chem. Soc.">
        <title>Structure of the lasso peptide isopeptidase identifies a topology for processing threaded substrates.</title>
        <authorList>
            <person name="Chekan J.R."/>
            <person name="Koos J.D."/>
            <person name="Zong C."/>
            <person name="Maksimov M.O."/>
            <person name="Link A.J."/>
            <person name="Nair S.K."/>
        </authorList>
    </citation>
    <scope>X-RAY CRYSTALLOGRAPHY (2.20 ANGSTROMS) OF 26-49 IN COMPLEX WITH ATXE2</scope>
    <scope>EXPRESSION IN E.COLI</scope>
</reference>
<keyword id="KW-0002">3D-structure</keyword>
<keyword id="KW-0044">Antibiotic</keyword>
<keyword id="KW-0929">Antimicrobial</keyword>
<keyword id="KW-0963">Cytoplasm</keyword>
<keyword id="KW-1017">Isopeptide bond</keyword>
<keyword id="KW-1185">Reference proteome</keyword>
<keyword id="KW-0964">Secreted</keyword>
<proteinExistence type="evidence at protein level"/>
<sequence>MRTYNRSLPARAGLTDLGKVTTHTKGPTPMVGLDSVSGQYWDQHAPLAD</sequence>
<evidence type="ECO:0000250" key="1">
    <source>
        <dbReference type="UniProtKB" id="E8RMD3"/>
    </source>
</evidence>
<evidence type="ECO:0000269" key="2">
    <source>
    </source>
</evidence>
<evidence type="ECO:0000269" key="3">
    <source>
    </source>
</evidence>
<evidence type="ECO:0000269" key="4">
    <source>
    </source>
</evidence>
<evidence type="ECO:0000303" key="5">
    <source>
    </source>
</evidence>
<evidence type="ECO:0000303" key="6">
    <source>
    </source>
</evidence>
<evidence type="ECO:0000303" key="7">
    <source>
    </source>
</evidence>
<evidence type="ECO:0000305" key="8">
    <source>
    </source>
</evidence>
<evidence type="ECO:0000305" key="9">
    <source>
    </source>
</evidence>
<evidence type="ECO:0000305" key="10">
    <source>
    </source>
</evidence>
<evidence type="ECO:0000312" key="11">
    <source>
        <dbReference type="EMBL" id="ADU14098.1"/>
    </source>
</evidence>
<evidence type="ECO:0000312" key="12">
    <source>
        <dbReference type="Proteomes" id="UP000001492"/>
    </source>
</evidence>
<evidence type="ECO:0007744" key="13">
    <source>
        <dbReference type="PDB" id="2M8F"/>
    </source>
</evidence>
<evidence type="ECO:0007744" key="14">
    <source>
        <dbReference type="PDB" id="2N6V"/>
    </source>
</evidence>
<evidence type="ECO:0007744" key="15">
    <source>
        <dbReference type="PDB" id="5TXE"/>
    </source>
</evidence>
<evidence type="ECO:0007829" key="16">
    <source>
        <dbReference type="PDB" id="2M8F"/>
    </source>
</evidence>
<evidence type="ECO:0007829" key="17">
    <source>
        <dbReference type="PDB" id="5TXE"/>
    </source>
</evidence>
<gene>
    <name evidence="5" type="primary">AtxA3</name>
    <name evidence="11" type="ordered locus">Astex_2447</name>
</gene>
<organism>
    <name type="scientific">Asticcacaulis excentricus (strain ATCC 15261 / DSM 4724 / KCTC 12464 / NCIMB 9791 / VKM B-1370 / CB 48)</name>
    <dbReference type="NCBI Taxonomy" id="573065"/>
    <lineage>
        <taxon>Bacteria</taxon>
        <taxon>Pseudomonadati</taxon>
        <taxon>Pseudomonadota</taxon>
        <taxon>Alphaproteobacteria</taxon>
        <taxon>Caulobacterales</taxon>
        <taxon>Caulobacteraceae</taxon>
        <taxon>Asticcacaulis</taxon>
    </lineage>
</organism>